<sequence>MKIAVLGGGSWGTALAHLLAGKGEDVRLWVRDPAVVEGVNRDHENPRYLKGLHLHEALRATCDAGEALEGADILLSVVPCQQTRTVLRSLRPRLKTGMVVVSASKGIETDGLRTVGEMVEDELAGLAPRYAVISGPSFAAEVVAGMPTAVVLGCADRDLGGTLREVFSTPTFRTYSCTDVRGVELGGAVKNVIAIAAGLSDGLGFGSNARAGLITRGLAEMGRLGVALGARGSTFMGLSGLGDLVLTCTGDLSRNRQVGLRLAEGQGLDAIVAGMGMVAEGVKTTEAVYELAQREGVDLPITQAMYAVLHDGRDPRDMVQELMTRELREE</sequence>
<dbReference type="EC" id="1.1.1.94" evidence="1"/>
<dbReference type="EMBL" id="AE017285">
    <property type="protein sequence ID" value="AAS97629.1"/>
    <property type="molecule type" value="Genomic_DNA"/>
</dbReference>
<dbReference type="RefSeq" id="WP_010940417.1">
    <property type="nucleotide sequence ID" value="NC_002937.3"/>
</dbReference>
<dbReference type="RefSeq" id="YP_012369.1">
    <property type="nucleotide sequence ID" value="NC_002937.3"/>
</dbReference>
<dbReference type="SMR" id="P61739"/>
<dbReference type="STRING" id="882.DVU_3159"/>
<dbReference type="PaxDb" id="882-DVU_3159"/>
<dbReference type="EnsemblBacteria" id="AAS97629">
    <property type="protein sequence ID" value="AAS97629"/>
    <property type="gene ID" value="DVU_3159"/>
</dbReference>
<dbReference type="KEGG" id="dvu:DVU_3159"/>
<dbReference type="PATRIC" id="fig|882.5.peg.2865"/>
<dbReference type="eggNOG" id="COG0240">
    <property type="taxonomic scope" value="Bacteria"/>
</dbReference>
<dbReference type="HOGENOM" id="CLU_033449_0_2_7"/>
<dbReference type="OrthoDB" id="9812273at2"/>
<dbReference type="PhylomeDB" id="P61739"/>
<dbReference type="UniPathway" id="UPA00940"/>
<dbReference type="Proteomes" id="UP000002194">
    <property type="component" value="Chromosome"/>
</dbReference>
<dbReference type="GO" id="GO:0005829">
    <property type="term" value="C:cytosol"/>
    <property type="evidence" value="ECO:0007669"/>
    <property type="project" value="TreeGrafter"/>
</dbReference>
<dbReference type="GO" id="GO:0047952">
    <property type="term" value="F:glycerol-3-phosphate dehydrogenase [NAD(P)+] activity"/>
    <property type="evidence" value="ECO:0007669"/>
    <property type="project" value="UniProtKB-UniRule"/>
</dbReference>
<dbReference type="GO" id="GO:0051287">
    <property type="term" value="F:NAD binding"/>
    <property type="evidence" value="ECO:0007669"/>
    <property type="project" value="InterPro"/>
</dbReference>
<dbReference type="GO" id="GO:0005975">
    <property type="term" value="P:carbohydrate metabolic process"/>
    <property type="evidence" value="ECO:0007669"/>
    <property type="project" value="InterPro"/>
</dbReference>
<dbReference type="GO" id="GO:0046167">
    <property type="term" value="P:glycerol-3-phosphate biosynthetic process"/>
    <property type="evidence" value="ECO:0007669"/>
    <property type="project" value="UniProtKB-UniRule"/>
</dbReference>
<dbReference type="GO" id="GO:0046168">
    <property type="term" value="P:glycerol-3-phosphate catabolic process"/>
    <property type="evidence" value="ECO:0007669"/>
    <property type="project" value="InterPro"/>
</dbReference>
<dbReference type="GO" id="GO:0006650">
    <property type="term" value="P:glycerophospholipid metabolic process"/>
    <property type="evidence" value="ECO:0007669"/>
    <property type="project" value="UniProtKB-UniRule"/>
</dbReference>
<dbReference type="GO" id="GO:0008654">
    <property type="term" value="P:phospholipid biosynthetic process"/>
    <property type="evidence" value="ECO:0007669"/>
    <property type="project" value="UniProtKB-KW"/>
</dbReference>
<dbReference type="FunFam" id="1.10.1040.10:FF:000001">
    <property type="entry name" value="Glycerol-3-phosphate dehydrogenase [NAD(P)+]"/>
    <property type="match status" value="1"/>
</dbReference>
<dbReference type="FunFam" id="3.40.50.720:FF:000019">
    <property type="entry name" value="Glycerol-3-phosphate dehydrogenase [NAD(P)+]"/>
    <property type="match status" value="1"/>
</dbReference>
<dbReference type="Gene3D" id="1.10.1040.10">
    <property type="entry name" value="N-(1-d-carboxylethyl)-l-norvaline Dehydrogenase, domain 2"/>
    <property type="match status" value="1"/>
</dbReference>
<dbReference type="Gene3D" id="3.40.50.720">
    <property type="entry name" value="NAD(P)-binding Rossmann-like Domain"/>
    <property type="match status" value="1"/>
</dbReference>
<dbReference type="HAMAP" id="MF_00394">
    <property type="entry name" value="NAD_Glyc3P_dehydrog"/>
    <property type="match status" value="1"/>
</dbReference>
<dbReference type="InterPro" id="IPR008927">
    <property type="entry name" value="6-PGluconate_DH-like_C_sf"/>
</dbReference>
<dbReference type="InterPro" id="IPR013328">
    <property type="entry name" value="6PGD_dom2"/>
</dbReference>
<dbReference type="InterPro" id="IPR006168">
    <property type="entry name" value="G3P_DH_NAD-dep"/>
</dbReference>
<dbReference type="InterPro" id="IPR006109">
    <property type="entry name" value="G3P_DH_NAD-dep_C"/>
</dbReference>
<dbReference type="InterPro" id="IPR011128">
    <property type="entry name" value="G3P_DH_NAD-dep_N"/>
</dbReference>
<dbReference type="InterPro" id="IPR036291">
    <property type="entry name" value="NAD(P)-bd_dom_sf"/>
</dbReference>
<dbReference type="NCBIfam" id="NF000940">
    <property type="entry name" value="PRK00094.1-2"/>
    <property type="match status" value="1"/>
</dbReference>
<dbReference type="NCBIfam" id="NF000942">
    <property type="entry name" value="PRK00094.1-4"/>
    <property type="match status" value="1"/>
</dbReference>
<dbReference type="PANTHER" id="PTHR11728">
    <property type="entry name" value="GLYCEROL-3-PHOSPHATE DEHYDROGENASE"/>
    <property type="match status" value="1"/>
</dbReference>
<dbReference type="PANTHER" id="PTHR11728:SF1">
    <property type="entry name" value="GLYCEROL-3-PHOSPHATE DEHYDROGENASE [NAD(+)] 2, CHLOROPLASTIC"/>
    <property type="match status" value="1"/>
</dbReference>
<dbReference type="Pfam" id="PF07479">
    <property type="entry name" value="NAD_Gly3P_dh_C"/>
    <property type="match status" value="1"/>
</dbReference>
<dbReference type="Pfam" id="PF01210">
    <property type="entry name" value="NAD_Gly3P_dh_N"/>
    <property type="match status" value="1"/>
</dbReference>
<dbReference type="PIRSF" id="PIRSF000114">
    <property type="entry name" value="Glycerol-3-P_dh"/>
    <property type="match status" value="1"/>
</dbReference>
<dbReference type="PRINTS" id="PR00077">
    <property type="entry name" value="GPDHDRGNASE"/>
</dbReference>
<dbReference type="SUPFAM" id="SSF48179">
    <property type="entry name" value="6-phosphogluconate dehydrogenase C-terminal domain-like"/>
    <property type="match status" value="1"/>
</dbReference>
<dbReference type="SUPFAM" id="SSF51735">
    <property type="entry name" value="NAD(P)-binding Rossmann-fold domains"/>
    <property type="match status" value="1"/>
</dbReference>
<dbReference type="PROSITE" id="PS00957">
    <property type="entry name" value="NAD_G3PDH"/>
    <property type="match status" value="1"/>
</dbReference>
<reference key="1">
    <citation type="journal article" date="2004" name="Nat. Biotechnol.">
        <title>The genome sequence of the anaerobic, sulfate-reducing bacterium Desulfovibrio vulgaris Hildenborough.</title>
        <authorList>
            <person name="Heidelberg J.F."/>
            <person name="Seshadri R."/>
            <person name="Haveman S.A."/>
            <person name="Hemme C.L."/>
            <person name="Paulsen I.T."/>
            <person name="Kolonay J.F."/>
            <person name="Eisen J.A."/>
            <person name="Ward N.L."/>
            <person name="Methe B.A."/>
            <person name="Brinkac L.M."/>
            <person name="Daugherty S.C."/>
            <person name="DeBoy R.T."/>
            <person name="Dodson R.J."/>
            <person name="Durkin A.S."/>
            <person name="Madupu R."/>
            <person name="Nelson W.C."/>
            <person name="Sullivan S.A."/>
            <person name="Fouts D.E."/>
            <person name="Haft D.H."/>
            <person name="Selengut J."/>
            <person name="Peterson J.D."/>
            <person name="Davidsen T.M."/>
            <person name="Zafar N."/>
            <person name="Zhou L."/>
            <person name="Radune D."/>
            <person name="Dimitrov G."/>
            <person name="Hance M."/>
            <person name="Tran K."/>
            <person name="Khouri H.M."/>
            <person name="Gill J."/>
            <person name="Utterback T.R."/>
            <person name="Feldblyum T.V."/>
            <person name="Wall J.D."/>
            <person name="Voordouw G."/>
            <person name="Fraser C.M."/>
        </authorList>
    </citation>
    <scope>NUCLEOTIDE SEQUENCE [LARGE SCALE GENOMIC DNA]</scope>
    <source>
        <strain>ATCC 29579 / DSM 644 / CCUG 34227 / NCIMB 8303 / VKM B-1760 / Hildenborough</strain>
    </source>
</reference>
<gene>
    <name evidence="1" type="primary">gpsA</name>
    <name type="ordered locus">DVU_3159</name>
</gene>
<feature type="chain" id="PRO_0000137956" description="Glycerol-3-phosphate dehydrogenase [NAD(P)+]">
    <location>
        <begin position="1"/>
        <end position="330"/>
    </location>
</feature>
<feature type="active site" description="Proton acceptor" evidence="1">
    <location>
        <position position="190"/>
    </location>
</feature>
<feature type="binding site" evidence="1">
    <location>
        <position position="10"/>
    </location>
    <ligand>
        <name>NADPH</name>
        <dbReference type="ChEBI" id="CHEBI:57783"/>
    </ligand>
</feature>
<feature type="binding site" evidence="1">
    <location>
        <position position="11"/>
    </location>
    <ligand>
        <name>NADPH</name>
        <dbReference type="ChEBI" id="CHEBI:57783"/>
    </ligand>
</feature>
<feature type="binding site" evidence="1">
    <location>
        <position position="31"/>
    </location>
    <ligand>
        <name>NADPH</name>
        <dbReference type="ChEBI" id="CHEBI:57783"/>
    </ligand>
</feature>
<feature type="binding site" evidence="1">
    <location>
        <position position="105"/>
    </location>
    <ligand>
        <name>NADPH</name>
        <dbReference type="ChEBI" id="CHEBI:57783"/>
    </ligand>
</feature>
<feature type="binding site" evidence="1">
    <location>
        <position position="105"/>
    </location>
    <ligand>
        <name>sn-glycerol 3-phosphate</name>
        <dbReference type="ChEBI" id="CHEBI:57597"/>
    </ligand>
</feature>
<feature type="binding site" evidence="1">
    <location>
        <position position="135"/>
    </location>
    <ligand>
        <name>sn-glycerol 3-phosphate</name>
        <dbReference type="ChEBI" id="CHEBI:57597"/>
    </ligand>
</feature>
<feature type="binding site" evidence="1">
    <location>
        <position position="137"/>
    </location>
    <ligand>
        <name>sn-glycerol 3-phosphate</name>
        <dbReference type="ChEBI" id="CHEBI:57597"/>
    </ligand>
</feature>
<feature type="binding site" evidence="1">
    <location>
        <position position="139"/>
    </location>
    <ligand>
        <name>NADPH</name>
        <dbReference type="ChEBI" id="CHEBI:57783"/>
    </ligand>
</feature>
<feature type="binding site" evidence="1">
    <location>
        <position position="190"/>
    </location>
    <ligand>
        <name>sn-glycerol 3-phosphate</name>
        <dbReference type="ChEBI" id="CHEBI:57597"/>
    </ligand>
</feature>
<feature type="binding site" evidence="1">
    <location>
        <position position="243"/>
    </location>
    <ligand>
        <name>sn-glycerol 3-phosphate</name>
        <dbReference type="ChEBI" id="CHEBI:57597"/>
    </ligand>
</feature>
<feature type="binding site" evidence="1">
    <location>
        <position position="253"/>
    </location>
    <ligand>
        <name>sn-glycerol 3-phosphate</name>
        <dbReference type="ChEBI" id="CHEBI:57597"/>
    </ligand>
</feature>
<feature type="binding site" evidence="1">
    <location>
        <position position="254"/>
    </location>
    <ligand>
        <name>NADPH</name>
        <dbReference type="ChEBI" id="CHEBI:57783"/>
    </ligand>
</feature>
<feature type="binding site" evidence="1">
    <location>
        <position position="254"/>
    </location>
    <ligand>
        <name>sn-glycerol 3-phosphate</name>
        <dbReference type="ChEBI" id="CHEBI:57597"/>
    </ligand>
</feature>
<feature type="binding site" evidence="1">
    <location>
        <position position="255"/>
    </location>
    <ligand>
        <name>sn-glycerol 3-phosphate</name>
        <dbReference type="ChEBI" id="CHEBI:57597"/>
    </ligand>
</feature>
<feature type="binding site" evidence="1">
    <location>
        <position position="278"/>
    </location>
    <ligand>
        <name>NADPH</name>
        <dbReference type="ChEBI" id="CHEBI:57783"/>
    </ligand>
</feature>
<feature type="binding site" evidence="1">
    <location>
        <position position="280"/>
    </location>
    <ligand>
        <name>NADPH</name>
        <dbReference type="ChEBI" id="CHEBI:57783"/>
    </ligand>
</feature>
<accession>P61739</accession>
<evidence type="ECO:0000255" key="1">
    <source>
        <dbReference type="HAMAP-Rule" id="MF_00394"/>
    </source>
</evidence>
<protein>
    <recommendedName>
        <fullName evidence="1">Glycerol-3-phosphate dehydrogenase [NAD(P)+]</fullName>
        <ecNumber evidence="1">1.1.1.94</ecNumber>
    </recommendedName>
    <alternativeName>
        <fullName evidence="1">NAD(P)(+)-dependent glycerol-3-phosphate dehydrogenase</fullName>
    </alternativeName>
    <alternativeName>
        <fullName evidence="1">NAD(P)H-dependent dihydroxyacetone-phosphate reductase</fullName>
    </alternativeName>
</protein>
<name>GPDA_NITV2</name>
<organism>
    <name type="scientific">Nitratidesulfovibrio vulgaris (strain ATCC 29579 / DSM 644 / CCUG 34227 / NCIMB 8303 / VKM B-1760 / Hildenborough)</name>
    <name type="common">Desulfovibrio vulgaris</name>
    <dbReference type="NCBI Taxonomy" id="882"/>
    <lineage>
        <taxon>Bacteria</taxon>
        <taxon>Pseudomonadati</taxon>
        <taxon>Thermodesulfobacteriota</taxon>
        <taxon>Desulfovibrionia</taxon>
        <taxon>Desulfovibrionales</taxon>
        <taxon>Desulfovibrionaceae</taxon>
        <taxon>Nitratidesulfovibrio</taxon>
    </lineage>
</organism>
<proteinExistence type="inferred from homology"/>
<comment type="function">
    <text evidence="1">Catalyzes the reduction of the glycolytic intermediate dihydroxyacetone phosphate (DHAP) to sn-glycerol 3-phosphate (G3P), the key precursor for phospholipid synthesis.</text>
</comment>
<comment type="catalytic activity">
    <reaction evidence="1">
        <text>sn-glycerol 3-phosphate + NAD(+) = dihydroxyacetone phosphate + NADH + H(+)</text>
        <dbReference type="Rhea" id="RHEA:11092"/>
        <dbReference type="ChEBI" id="CHEBI:15378"/>
        <dbReference type="ChEBI" id="CHEBI:57540"/>
        <dbReference type="ChEBI" id="CHEBI:57597"/>
        <dbReference type="ChEBI" id="CHEBI:57642"/>
        <dbReference type="ChEBI" id="CHEBI:57945"/>
        <dbReference type="EC" id="1.1.1.94"/>
    </reaction>
    <physiologicalReaction direction="right-to-left" evidence="1">
        <dbReference type="Rhea" id="RHEA:11094"/>
    </physiologicalReaction>
</comment>
<comment type="catalytic activity">
    <reaction evidence="1">
        <text>sn-glycerol 3-phosphate + NADP(+) = dihydroxyacetone phosphate + NADPH + H(+)</text>
        <dbReference type="Rhea" id="RHEA:11096"/>
        <dbReference type="ChEBI" id="CHEBI:15378"/>
        <dbReference type="ChEBI" id="CHEBI:57597"/>
        <dbReference type="ChEBI" id="CHEBI:57642"/>
        <dbReference type="ChEBI" id="CHEBI:57783"/>
        <dbReference type="ChEBI" id="CHEBI:58349"/>
        <dbReference type="EC" id="1.1.1.94"/>
    </reaction>
    <physiologicalReaction direction="right-to-left" evidence="1">
        <dbReference type="Rhea" id="RHEA:11098"/>
    </physiologicalReaction>
</comment>
<comment type="pathway">
    <text evidence="1">Membrane lipid metabolism; glycerophospholipid metabolism.</text>
</comment>
<comment type="subcellular location">
    <subcellularLocation>
        <location evidence="1">Cytoplasm</location>
    </subcellularLocation>
</comment>
<comment type="similarity">
    <text evidence="1">Belongs to the NAD-dependent glycerol-3-phosphate dehydrogenase family.</text>
</comment>
<keyword id="KW-0963">Cytoplasm</keyword>
<keyword id="KW-0444">Lipid biosynthesis</keyword>
<keyword id="KW-0443">Lipid metabolism</keyword>
<keyword id="KW-0520">NAD</keyword>
<keyword id="KW-0521">NADP</keyword>
<keyword id="KW-0547">Nucleotide-binding</keyword>
<keyword id="KW-0560">Oxidoreductase</keyword>
<keyword id="KW-0594">Phospholipid biosynthesis</keyword>
<keyword id="KW-1208">Phospholipid metabolism</keyword>
<keyword id="KW-1185">Reference proteome</keyword>